<gene>
    <name type="primary">ssn8</name>
    <name type="ORF">ACLA_074740</name>
</gene>
<proteinExistence type="inferred from homology"/>
<accession>A1C7R6</accession>
<feature type="chain" id="PRO_0000314266" description="RNA polymerase II holoenzyme cyclin-like subunit">
    <location>
        <begin position="1"/>
        <end position="302"/>
    </location>
</feature>
<feature type="domain" description="Cyclin N-terminal">
    <location>
        <begin position="53"/>
        <end position="142"/>
    </location>
</feature>
<protein>
    <recommendedName>
        <fullName>RNA polymerase II holoenzyme cyclin-like subunit</fullName>
    </recommendedName>
</protein>
<dbReference type="EMBL" id="DS027045">
    <property type="protein sequence ID" value="EAW14437.1"/>
    <property type="status" value="ALT_SEQ"/>
    <property type="molecule type" value="Genomic_DNA"/>
</dbReference>
<dbReference type="RefSeq" id="XP_001275863.1">
    <property type="nucleotide sequence ID" value="XM_001275862.1"/>
</dbReference>
<dbReference type="SMR" id="A1C7R6"/>
<dbReference type="STRING" id="344612.A1C7R6"/>
<dbReference type="EnsemblFungi" id="EAW14437">
    <property type="protein sequence ID" value="EAW14437"/>
    <property type="gene ID" value="ACLA_074740"/>
</dbReference>
<dbReference type="GeneID" id="4707536"/>
<dbReference type="KEGG" id="act:ACLA_074740"/>
<dbReference type="eggNOG" id="KOG0794">
    <property type="taxonomic scope" value="Eukaryota"/>
</dbReference>
<dbReference type="OrthoDB" id="10266018at2759"/>
<dbReference type="Proteomes" id="UP000006701">
    <property type="component" value="Unassembled WGS sequence"/>
</dbReference>
<dbReference type="GO" id="GO:0005634">
    <property type="term" value="C:nucleus"/>
    <property type="evidence" value="ECO:0007669"/>
    <property type="project" value="UniProtKB-SubCell"/>
</dbReference>
<dbReference type="GO" id="GO:0016538">
    <property type="term" value="F:cyclin-dependent protein serine/threonine kinase regulator activity"/>
    <property type="evidence" value="ECO:0007669"/>
    <property type="project" value="InterPro"/>
</dbReference>
<dbReference type="GO" id="GO:0006357">
    <property type="term" value="P:regulation of transcription by RNA polymerase II"/>
    <property type="evidence" value="ECO:0007669"/>
    <property type="project" value="InterPro"/>
</dbReference>
<dbReference type="CDD" id="cd20513">
    <property type="entry name" value="CYCLIN_CCNC_rpt1"/>
    <property type="match status" value="1"/>
</dbReference>
<dbReference type="FunFam" id="1.10.472.10:FF:000092">
    <property type="entry name" value="RNA polymerase II holoenzyme cyclin-like subunit"/>
    <property type="match status" value="1"/>
</dbReference>
<dbReference type="Gene3D" id="1.10.472.10">
    <property type="entry name" value="Cyclin-like"/>
    <property type="match status" value="2"/>
</dbReference>
<dbReference type="InterPro" id="IPR013763">
    <property type="entry name" value="Cyclin-like_dom"/>
</dbReference>
<dbReference type="InterPro" id="IPR036915">
    <property type="entry name" value="Cyclin-like_sf"/>
</dbReference>
<dbReference type="InterPro" id="IPR043198">
    <property type="entry name" value="Cyclin/Ssn8"/>
</dbReference>
<dbReference type="InterPro" id="IPR006671">
    <property type="entry name" value="Cyclin_N"/>
</dbReference>
<dbReference type="PANTHER" id="PTHR10026">
    <property type="entry name" value="CYCLIN"/>
    <property type="match status" value="1"/>
</dbReference>
<dbReference type="Pfam" id="PF00134">
    <property type="entry name" value="Cyclin_N"/>
    <property type="match status" value="1"/>
</dbReference>
<dbReference type="PIRSF" id="PIRSF028758">
    <property type="entry name" value="Cyclin, C/H/G types"/>
    <property type="match status" value="1"/>
</dbReference>
<dbReference type="SMART" id="SM00385">
    <property type="entry name" value="CYCLIN"/>
    <property type="match status" value="1"/>
</dbReference>
<dbReference type="SUPFAM" id="SSF47954">
    <property type="entry name" value="Cyclin-like"/>
    <property type="match status" value="2"/>
</dbReference>
<evidence type="ECO:0000250" key="1"/>
<evidence type="ECO:0000305" key="2"/>
<name>SSN8_ASPCL</name>
<organism>
    <name type="scientific">Aspergillus clavatus (strain ATCC 1007 / CBS 513.65 / DSM 816 / NCTC 3887 / NRRL 1 / QM 1276 / 107)</name>
    <dbReference type="NCBI Taxonomy" id="344612"/>
    <lineage>
        <taxon>Eukaryota</taxon>
        <taxon>Fungi</taxon>
        <taxon>Dikarya</taxon>
        <taxon>Ascomycota</taxon>
        <taxon>Pezizomycotina</taxon>
        <taxon>Eurotiomycetes</taxon>
        <taxon>Eurotiomycetidae</taxon>
        <taxon>Eurotiales</taxon>
        <taxon>Aspergillaceae</taxon>
        <taxon>Aspergillus</taxon>
        <taxon>Aspergillus subgen. Fumigati</taxon>
    </lineage>
</organism>
<comment type="function">
    <text evidence="1">Component of the srb8-11 complex. The srb8-11 complex is a regulatory module of the Mediator complex which is itself involved in regulation of basal and activated RNA polymerase II-dependent transcription. The srb8-11 complex may be involved in the transcriptional repression of a subset of genes regulated by Mediator. It may inhibit the association of the Mediator complex with RNA polymerase II to form the holoenzyme complex. The srb8-11 complex phosphorylates the C-terminal domain (CTD) of the largest subunit of RNA polymerase II (By similarity).</text>
</comment>
<comment type="subunit">
    <text evidence="1">Component of the srb8-11 complex, a regulatory module of the Mediator complex.</text>
</comment>
<comment type="subcellular location">
    <subcellularLocation>
        <location evidence="2">Nucleus</location>
    </subcellularLocation>
</comment>
<comment type="similarity">
    <text evidence="2">Belongs to the cyclin family. Cyclin C subfamily.</text>
</comment>
<comment type="sequence caution" evidence="2">
    <conflict type="erroneous gene model prediction">
        <sequence resource="EMBL-CDS" id="EAW14437"/>
    </conflict>
</comment>
<keyword id="KW-0010">Activator</keyword>
<keyword id="KW-0195">Cyclin</keyword>
<keyword id="KW-0539">Nucleus</keyword>
<keyword id="KW-1185">Reference proteome</keyword>
<keyword id="KW-0678">Repressor</keyword>
<keyword id="KW-0804">Transcription</keyword>
<keyword id="KW-0805">Transcription regulation</keyword>
<sequence>MAANYWASTQRRHWLFTRERLAEIREAFRERHKLAHSQFPLPDQRLLNIYFSQQLIKLGKRMSTRQQALATAQVYIKRFYTKNEIRHTNPYLVLTTAFYLACKMEECPQHIRFVVGEARSLWPEFITPDVSKLGECEFSLISEMNSQLIVHHPYRTLSGLQSELSLTSDEVALAWSVINDHYLTDLPLLYSPHVIAVMAVMVAVVFKPGPGNFHGSAAPVLAGAMRDGGMNMLAALGDKSGNEPPPKVQKLINWLAESEVDIKAVIECTQELVSLYEVWEQYSEKNCKELLGRMVKTKHLDK</sequence>
<reference key="1">
    <citation type="journal article" date="2008" name="PLoS Genet.">
        <title>Genomic islands in the pathogenic filamentous fungus Aspergillus fumigatus.</title>
        <authorList>
            <person name="Fedorova N.D."/>
            <person name="Khaldi N."/>
            <person name="Joardar V.S."/>
            <person name="Maiti R."/>
            <person name="Amedeo P."/>
            <person name="Anderson M.J."/>
            <person name="Crabtree J."/>
            <person name="Silva J.C."/>
            <person name="Badger J.H."/>
            <person name="Albarraq A."/>
            <person name="Angiuoli S."/>
            <person name="Bussey H."/>
            <person name="Bowyer P."/>
            <person name="Cotty P.J."/>
            <person name="Dyer P.S."/>
            <person name="Egan A."/>
            <person name="Galens K."/>
            <person name="Fraser-Liggett C.M."/>
            <person name="Haas B.J."/>
            <person name="Inman J.M."/>
            <person name="Kent R."/>
            <person name="Lemieux S."/>
            <person name="Malavazi I."/>
            <person name="Orvis J."/>
            <person name="Roemer T."/>
            <person name="Ronning C.M."/>
            <person name="Sundaram J.P."/>
            <person name="Sutton G."/>
            <person name="Turner G."/>
            <person name="Venter J.C."/>
            <person name="White O.R."/>
            <person name="Whitty B.R."/>
            <person name="Youngman P."/>
            <person name="Wolfe K.H."/>
            <person name="Goldman G.H."/>
            <person name="Wortman J.R."/>
            <person name="Jiang B."/>
            <person name="Denning D.W."/>
            <person name="Nierman W.C."/>
        </authorList>
    </citation>
    <scope>NUCLEOTIDE SEQUENCE [LARGE SCALE GENOMIC DNA]</scope>
    <source>
        <strain>ATCC 1007 / CBS 513.65 / DSM 816 / NCTC 3887 / NRRL 1 / QM 1276 / 107</strain>
    </source>
</reference>